<dbReference type="EMBL" id="AF514291">
    <property type="protein sequence ID" value="AAM49792.1"/>
    <property type="molecule type" value="mRNA"/>
</dbReference>
<dbReference type="SMR" id="Q8LKI3"/>
<dbReference type="EnsemblPlants" id="PNW70673">
    <property type="protein sequence ID" value="PNW70673"/>
    <property type="gene ID" value="CHLRE_17g729800v5"/>
</dbReference>
<dbReference type="Gramene" id="PNW70673">
    <property type="protein sequence ID" value="PNW70673"/>
    <property type="gene ID" value="CHLRE_17g729800v5"/>
</dbReference>
<dbReference type="OMA" id="CCLPARS"/>
<dbReference type="OrthoDB" id="2148490at2759"/>
<dbReference type="BioCyc" id="MetaCyc:MONOMER-16600"/>
<dbReference type="GO" id="GO:0009535">
    <property type="term" value="C:chloroplast thylakoid membrane"/>
    <property type="evidence" value="ECO:0007669"/>
    <property type="project" value="UniProtKB-SubCell"/>
</dbReference>
<dbReference type="GO" id="GO:0032977">
    <property type="term" value="F:membrane insertase activity"/>
    <property type="evidence" value="ECO:0007669"/>
    <property type="project" value="InterPro"/>
</dbReference>
<dbReference type="CDD" id="cd20070">
    <property type="entry name" value="5TM_YidC_Alb3"/>
    <property type="match status" value="1"/>
</dbReference>
<dbReference type="InterPro" id="IPR001708">
    <property type="entry name" value="YidC/ALB3/OXA1/COX18"/>
</dbReference>
<dbReference type="InterPro" id="IPR028055">
    <property type="entry name" value="YidC/Oxa/ALB_C"/>
</dbReference>
<dbReference type="InterPro" id="IPR047196">
    <property type="entry name" value="YidC_ALB_C"/>
</dbReference>
<dbReference type="NCBIfam" id="TIGR03592">
    <property type="entry name" value="yidC_oxa1_cterm"/>
    <property type="match status" value="1"/>
</dbReference>
<dbReference type="PANTHER" id="PTHR12428:SF14">
    <property type="entry name" value="ALBINO3-LIKE PROTEIN 1, CHLOROPLASTIC"/>
    <property type="match status" value="1"/>
</dbReference>
<dbReference type="PANTHER" id="PTHR12428">
    <property type="entry name" value="OXA1"/>
    <property type="match status" value="1"/>
</dbReference>
<dbReference type="Pfam" id="PF02096">
    <property type="entry name" value="60KD_IMP"/>
    <property type="match status" value="1"/>
</dbReference>
<gene>
    <name type="primary">ALB3.2</name>
</gene>
<sequence>MALQMKQSPSMGVRRASQPVLPPRPIVHRGVGSVSRRPAVVVKASLLDAASAASAVDAVHHATQLYTLAEGGPIDVLAQFFEFVLQTLDEGLESAKIPYSYGFAIIALTVLVKVATFPLTQKQVESTLSLQALQPRVKELQAKYADDPENLQLETARLYKEAGVNPLAGCFPTLATIPVFIGLYNALSNAAKEGLLTEGFFWIPSLGGPTTIGGGLEWLVPFENGAPPVGWANAAAYLVMPVLLVASQYASQKIISSQNNQDPSQQQAQAILKFLPLMIGWFSLNVPSGLTLYWFVNNLLSTGQQLYLKATVKVNIPEAIKAPATAGSSTPIVKPKEERVKKVTGKELGSRKKRRNDDGEEVEDVEVEVVSSGSSSSSGSNGASGRKGEKFRALKAREAAAKAASTVSAGAGGSEEGKDNSA</sequence>
<feature type="transit peptide" description="Chloroplast" evidence="1">
    <location>
        <begin position="1"/>
        <end status="unknown"/>
    </location>
</feature>
<feature type="chain" id="PRO_0000020369" description="Inner membrane ALBINO3-like protein 2, chloroplastic">
    <location>
        <begin status="unknown"/>
        <end position="422"/>
    </location>
</feature>
<feature type="topological domain" description="Lumenal" evidence="1">
    <location>
        <begin status="unknown"/>
        <end position="64"/>
    </location>
</feature>
<feature type="transmembrane region" description="Helical" evidence="1">
    <location>
        <begin position="65"/>
        <end position="85"/>
    </location>
</feature>
<feature type="topological domain" description="Stromal" evidence="1">
    <location>
        <begin position="86"/>
        <end position="96"/>
    </location>
</feature>
<feature type="transmembrane region" description="Helical" evidence="1">
    <location>
        <begin position="97"/>
        <end position="117"/>
    </location>
</feature>
<feature type="topological domain" description="Lumenal" evidence="1">
    <location>
        <begin position="118"/>
        <end position="166"/>
    </location>
</feature>
<feature type="transmembrane region" description="Helical" evidence="1">
    <location>
        <begin position="167"/>
        <end position="187"/>
    </location>
</feature>
<feature type="topological domain" description="Stromal" evidence="1">
    <location>
        <begin position="188"/>
        <end position="225"/>
    </location>
</feature>
<feature type="transmembrane region" description="Helical" evidence="1">
    <location>
        <begin position="226"/>
        <end position="246"/>
    </location>
</feature>
<feature type="topological domain" description="Lumenal" evidence="1">
    <location>
        <begin position="247"/>
        <end position="275"/>
    </location>
</feature>
<feature type="transmembrane region" description="Helical" evidence="1">
    <location>
        <begin position="276"/>
        <end position="296"/>
    </location>
</feature>
<feature type="topological domain" description="Stromal" evidence="1">
    <location>
        <begin position="297"/>
        <end position="422"/>
    </location>
</feature>
<feature type="region of interest" description="Disordered" evidence="2">
    <location>
        <begin position="1"/>
        <end position="22"/>
    </location>
</feature>
<feature type="region of interest" description="Disordered" evidence="2">
    <location>
        <begin position="325"/>
        <end position="422"/>
    </location>
</feature>
<feature type="compositionally biased region" description="Polar residues" evidence="2">
    <location>
        <begin position="1"/>
        <end position="10"/>
    </location>
</feature>
<feature type="compositionally biased region" description="Basic and acidic residues" evidence="2">
    <location>
        <begin position="334"/>
        <end position="350"/>
    </location>
</feature>
<feature type="compositionally biased region" description="Acidic residues" evidence="2">
    <location>
        <begin position="358"/>
        <end position="367"/>
    </location>
</feature>
<feature type="compositionally biased region" description="Low complexity" evidence="2">
    <location>
        <begin position="368"/>
        <end position="380"/>
    </location>
</feature>
<feature type="compositionally biased region" description="Basic and acidic residues" evidence="2">
    <location>
        <begin position="386"/>
        <end position="400"/>
    </location>
</feature>
<organism>
    <name type="scientific">Chlamydomonas reinhardtii</name>
    <name type="common">Chlamydomonas smithii</name>
    <dbReference type="NCBI Taxonomy" id="3055"/>
    <lineage>
        <taxon>Eukaryota</taxon>
        <taxon>Viridiplantae</taxon>
        <taxon>Chlorophyta</taxon>
        <taxon>core chlorophytes</taxon>
        <taxon>Chlorophyceae</taxon>
        <taxon>CS clade</taxon>
        <taxon>Chlamydomonadales</taxon>
        <taxon>Chlamydomonadaceae</taxon>
        <taxon>Chlamydomonas</taxon>
    </lineage>
</organism>
<evidence type="ECO:0000255" key="1"/>
<evidence type="ECO:0000256" key="2">
    <source>
        <dbReference type="SAM" id="MobiDB-lite"/>
    </source>
</evidence>
<evidence type="ECO:0000305" key="3"/>
<comment type="function">
    <text>Required for the insertion of some light-harvesting complexes (LHC) proteins into the chloroplast thylakoid membrane. Essential for the assembly and activity of LHC I and II. Its function is probably partly distinct from that of ALB3.1.</text>
</comment>
<comment type="subcellular location">
    <subcellularLocation>
        <location evidence="3">Plastid</location>
        <location evidence="3">Chloroplast thylakoid membrane</location>
        <topology evidence="3">Multi-pass membrane protein</topology>
    </subcellularLocation>
</comment>
<comment type="similarity">
    <text evidence="3">Belongs to the OXA1/ALB3/YidC (TC 2.A.9.2) family.</text>
</comment>
<name>ALB32_CHLRE</name>
<protein>
    <recommendedName>
        <fullName>Inner membrane ALBINO3-like protein 2, chloroplastic</fullName>
    </recommendedName>
</protein>
<reference key="1">
    <citation type="journal article" date="2002" name="Plant Cell">
        <title>Loss of Albino3 leads to the specific depletion of the light-harvesting system.</title>
        <authorList>
            <person name="Bellafiore S."/>
            <person name="Ferris P."/>
            <person name="Naver H."/>
            <person name="Goehre V."/>
            <person name="Rochaix J.-D."/>
        </authorList>
    </citation>
    <scope>NUCLEOTIDE SEQUENCE [MRNA]</scope>
</reference>
<proteinExistence type="evidence at transcript level"/>
<keyword id="KW-0150">Chloroplast</keyword>
<keyword id="KW-0472">Membrane</keyword>
<keyword id="KW-0934">Plastid</keyword>
<keyword id="KW-0793">Thylakoid</keyword>
<keyword id="KW-0809">Transit peptide</keyword>
<keyword id="KW-0812">Transmembrane</keyword>
<keyword id="KW-1133">Transmembrane helix</keyword>
<accession>Q8LKI3</accession>